<protein>
    <recommendedName>
        <fullName>Adenosylhomocysteinase</fullName>
        <shortName>AdoHcyase</shortName>
        <ecNumber evidence="1">3.13.2.1</ecNumber>
    </recommendedName>
    <alternativeName>
        <fullName>S-adenosyl-L-homocysteine hydrolase</fullName>
    </alternativeName>
</protein>
<accession>Q710C4</accession>
<accession>Q4R1H7</accession>
<organism>
    <name type="scientific">Sus scrofa</name>
    <name type="common">Pig</name>
    <dbReference type="NCBI Taxonomy" id="9823"/>
    <lineage>
        <taxon>Eukaryota</taxon>
        <taxon>Metazoa</taxon>
        <taxon>Chordata</taxon>
        <taxon>Craniata</taxon>
        <taxon>Vertebrata</taxon>
        <taxon>Euteleostomi</taxon>
        <taxon>Mammalia</taxon>
        <taxon>Eutheria</taxon>
        <taxon>Laurasiatheria</taxon>
        <taxon>Artiodactyla</taxon>
        <taxon>Suina</taxon>
        <taxon>Suidae</taxon>
        <taxon>Sus</taxon>
    </lineage>
</organism>
<gene>
    <name type="primary">AHCY</name>
</gene>
<sequence>MSEKLPYKVADISLAAWGRKALDLAENEMPGLMRMREMYSASKPLKGARIAGCLHMTVETAVLIETLVALGAEVRWSSCNIFSTQDHAAAAIAKAGIPVYAWKGETDEEYLWCIEQTLYFKDGPLNMILDDGGDLTNLVHTKYPELLSGIRGISEETTTGVHNLYKMKANGILKVPAINVNDSVTKSKFDNLYGCRESLIDGIKRATDVMIAGKVAVVAGYGDVGKGCAQALRGFGARVIITEIDPINALQAAMEGYEVTTMDEACQEGNIFVTTTGCIDIILGRHFEQMKDDAIVCNIGHFDVEIDVKWLNENAVEKVNIKPQVDRYLLKNGHRIILLAEGRLVNLGCAMGHPSFVMSNSFTNQVLAQIELWTHPDKYPVGVHFLPKKLDEAVAEAHLGKLNVKLTKLTEKQAQYLGMSREGPFKPDHYRY</sequence>
<comment type="function">
    <text evidence="1 3">Catalyzes the hydrolysis of S-adenosyl-L-homocysteine to form adenosine and homocysteine (By similarity). Binds copper ions (By similarity).</text>
</comment>
<comment type="catalytic activity">
    <reaction evidence="1">
        <text>S-adenosyl-L-homocysteine + H2O = L-homocysteine + adenosine</text>
        <dbReference type="Rhea" id="RHEA:21708"/>
        <dbReference type="ChEBI" id="CHEBI:15377"/>
        <dbReference type="ChEBI" id="CHEBI:16335"/>
        <dbReference type="ChEBI" id="CHEBI:57856"/>
        <dbReference type="ChEBI" id="CHEBI:58199"/>
        <dbReference type="EC" id="3.13.2.1"/>
    </reaction>
    <physiologicalReaction direction="left-to-right" evidence="1">
        <dbReference type="Rhea" id="RHEA:21709"/>
    </physiologicalReaction>
</comment>
<comment type="cofactor">
    <cofactor evidence="1">
        <name>NAD(+)</name>
        <dbReference type="ChEBI" id="CHEBI:57540"/>
    </cofactor>
    <text evidence="1">Binds 1 NAD(+) per subunit.</text>
</comment>
<comment type="pathway">
    <text>Amino-acid biosynthesis; L-homocysteine biosynthesis; L-homocysteine from S-adenosyl-L-homocysteine: step 1/1.</text>
</comment>
<comment type="subunit">
    <text evidence="1 2">Homotetramer. Interaction with AHCYL1 (By similarity).</text>
</comment>
<comment type="subcellular location">
    <subcellularLocation>
        <location evidence="2">Cytoplasm</location>
    </subcellularLocation>
    <subcellularLocation>
        <location evidence="2">Melanosome</location>
    </subcellularLocation>
    <subcellularLocation>
        <location evidence="2">Nucleus</location>
    </subcellularLocation>
    <subcellularLocation>
        <location evidence="2">Endoplasmic reticulum</location>
    </subcellularLocation>
</comment>
<comment type="similarity">
    <text evidence="4">Belongs to the adenosylhomocysteinase family.</text>
</comment>
<proteinExistence type="inferred from homology"/>
<name>SAHH_PIG</name>
<reference key="1">
    <citation type="journal article" date="2002" name="Cytogenet. Genome Res.">
        <title>Characterization and chromosomal assignment of the porcine AHCY gene for S-adenosylhomocysteine hydrolase.</title>
        <authorList>
            <person name="Leeb T."/>
            <person name="Rohrer G.A."/>
        </authorList>
    </citation>
    <scope>NUCLEOTIDE SEQUENCE [GENOMIC DNA]</scope>
</reference>
<reference key="2">
    <citation type="submission" date="2005-03" db="EMBL/GenBank/DDBJ databases">
        <title>Expression of agouti signaling protein gene (ASIP) in pig.</title>
        <authorList>
            <person name="Okumura N."/>
            <person name="Nii M."/>
            <person name="Hamasima N."/>
        </authorList>
    </citation>
    <scope>NUCLEOTIDE SEQUENCE [GENOMIC DNA]</scope>
</reference>
<keyword id="KW-0007">Acetylation</keyword>
<keyword id="KW-0186">Copper</keyword>
<keyword id="KW-0963">Cytoplasm</keyword>
<keyword id="KW-0256">Endoplasmic reticulum</keyword>
<keyword id="KW-0378">Hydrolase</keyword>
<keyword id="KW-0379">Hydroxylation</keyword>
<keyword id="KW-0520">NAD</keyword>
<keyword id="KW-0539">Nucleus</keyword>
<keyword id="KW-0554">One-carbon metabolism</keyword>
<keyword id="KW-0597">Phosphoprotein</keyword>
<keyword id="KW-1185">Reference proteome</keyword>
<feature type="initiator methionine" description="Removed" evidence="2">
    <location>
        <position position="1"/>
    </location>
</feature>
<feature type="chain" id="PRO_0000116904" description="Adenosylhomocysteinase">
    <location>
        <begin position="2"/>
        <end position="432"/>
    </location>
</feature>
<feature type="region of interest" description="NAD binding" evidence="1">
    <location>
        <begin position="183"/>
        <end position="350"/>
    </location>
</feature>
<feature type="binding site" evidence="1">
    <location>
        <position position="57"/>
    </location>
    <ligand>
        <name>substrate</name>
    </ligand>
</feature>
<feature type="binding site" evidence="1">
    <location>
        <position position="131"/>
    </location>
    <ligand>
        <name>substrate</name>
    </ligand>
</feature>
<feature type="binding site" evidence="1">
    <location>
        <position position="156"/>
    </location>
    <ligand>
        <name>substrate</name>
    </ligand>
</feature>
<feature type="binding site" evidence="1">
    <location>
        <position position="186"/>
    </location>
    <ligand>
        <name>substrate</name>
    </ligand>
</feature>
<feature type="binding site" evidence="1">
    <location>
        <position position="190"/>
    </location>
    <ligand>
        <name>substrate</name>
    </ligand>
</feature>
<feature type="modified residue" description="N-acetylserine" evidence="2">
    <location>
        <position position="2"/>
    </location>
</feature>
<feature type="modified residue" description="Phosphoserine" evidence="2">
    <location>
        <position position="183"/>
    </location>
</feature>
<feature type="modified residue" description="N6-(2-hydroxyisobutyryl)lysine" evidence="2">
    <location>
        <position position="186"/>
    </location>
</feature>
<feature type="modified residue" description="Phosphotyrosine" evidence="3">
    <location>
        <position position="193"/>
    </location>
</feature>
<feature type="sequence conflict" description="In Ref. 2; BAD99576." evidence="4" ref="2">
    <original>A</original>
    <variation>T</variation>
    <location>
        <position position="41"/>
    </location>
</feature>
<dbReference type="EC" id="3.13.2.1" evidence="1"/>
<dbReference type="EMBL" id="AJ427478">
    <property type="protein sequence ID" value="CAD20603.1"/>
    <property type="molecule type" value="Genomic_DNA"/>
</dbReference>
<dbReference type="EMBL" id="AB206998">
    <property type="protein sequence ID" value="BAD99576.1"/>
    <property type="molecule type" value="Genomic_DNA"/>
</dbReference>
<dbReference type="RefSeq" id="NP_001011727.1">
    <property type="nucleotide sequence ID" value="NM_001011727.1"/>
</dbReference>
<dbReference type="SMR" id="Q710C4"/>
<dbReference type="FunCoup" id="Q710C4">
    <property type="interactions" value="1704"/>
</dbReference>
<dbReference type="STRING" id="9823.ENSSSCP00000071725"/>
<dbReference type="PaxDb" id="9823-ENSSSCP00000007750"/>
<dbReference type="PeptideAtlas" id="Q710C4"/>
<dbReference type="Ensembl" id="ENSSSCT00115014281">
    <property type="protein sequence ID" value="ENSSSCP00115013490"/>
    <property type="gene ID" value="ENSSSCG00115008173"/>
</dbReference>
<dbReference type="GeneID" id="497050"/>
<dbReference type="KEGG" id="ssc:497050"/>
<dbReference type="CTD" id="191"/>
<dbReference type="eggNOG" id="KOG1370">
    <property type="taxonomic scope" value="Eukaryota"/>
</dbReference>
<dbReference type="HOGENOM" id="CLU_025194_2_1_1"/>
<dbReference type="InParanoid" id="Q710C4"/>
<dbReference type="OrthoDB" id="10007170at2759"/>
<dbReference type="UniPathway" id="UPA00314">
    <property type="reaction ID" value="UER00076"/>
</dbReference>
<dbReference type="Proteomes" id="UP000008227">
    <property type="component" value="Unplaced"/>
</dbReference>
<dbReference type="Proteomes" id="UP000314985">
    <property type="component" value="Unplaced"/>
</dbReference>
<dbReference type="Proteomes" id="UP000694570">
    <property type="component" value="Unplaced"/>
</dbReference>
<dbReference type="Proteomes" id="UP000694571">
    <property type="component" value="Unplaced"/>
</dbReference>
<dbReference type="Proteomes" id="UP000694720">
    <property type="component" value="Unplaced"/>
</dbReference>
<dbReference type="Proteomes" id="UP000694722">
    <property type="component" value="Unplaced"/>
</dbReference>
<dbReference type="Proteomes" id="UP000694723">
    <property type="component" value="Unplaced"/>
</dbReference>
<dbReference type="Proteomes" id="UP000694724">
    <property type="component" value="Unplaced"/>
</dbReference>
<dbReference type="Proteomes" id="UP000694725">
    <property type="component" value="Unplaced"/>
</dbReference>
<dbReference type="Proteomes" id="UP000694726">
    <property type="component" value="Unplaced"/>
</dbReference>
<dbReference type="Proteomes" id="UP000694727">
    <property type="component" value="Unplaced"/>
</dbReference>
<dbReference type="Proteomes" id="UP000694728">
    <property type="component" value="Unplaced"/>
</dbReference>
<dbReference type="GO" id="GO:0005829">
    <property type="term" value="C:cytosol"/>
    <property type="evidence" value="ECO:0000318"/>
    <property type="project" value="GO_Central"/>
</dbReference>
<dbReference type="GO" id="GO:0005783">
    <property type="term" value="C:endoplasmic reticulum"/>
    <property type="evidence" value="ECO:0007669"/>
    <property type="project" value="UniProtKB-SubCell"/>
</dbReference>
<dbReference type="GO" id="GO:0042470">
    <property type="term" value="C:melanosome"/>
    <property type="evidence" value="ECO:0007669"/>
    <property type="project" value="UniProtKB-SubCell"/>
</dbReference>
<dbReference type="GO" id="GO:0005634">
    <property type="term" value="C:nucleus"/>
    <property type="evidence" value="ECO:0007669"/>
    <property type="project" value="UniProtKB-SubCell"/>
</dbReference>
<dbReference type="GO" id="GO:0004013">
    <property type="term" value="F:adenosylhomocysteinase activity"/>
    <property type="evidence" value="ECO:0000250"/>
    <property type="project" value="UniProtKB"/>
</dbReference>
<dbReference type="GO" id="GO:0051287">
    <property type="term" value="F:NAD binding"/>
    <property type="evidence" value="ECO:0000250"/>
    <property type="project" value="UniProtKB"/>
</dbReference>
<dbReference type="GO" id="GO:0006730">
    <property type="term" value="P:one-carbon metabolic process"/>
    <property type="evidence" value="ECO:0007669"/>
    <property type="project" value="UniProtKB-KW"/>
</dbReference>
<dbReference type="GO" id="GO:0033353">
    <property type="term" value="P:S-adenosylmethionine cycle"/>
    <property type="evidence" value="ECO:0000318"/>
    <property type="project" value="GO_Central"/>
</dbReference>
<dbReference type="CDD" id="cd00401">
    <property type="entry name" value="SAHH"/>
    <property type="match status" value="1"/>
</dbReference>
<dbReference type="FunFam" id="3.40.50.1480:FF:000004">
    <property type="entry name" value="Adenosylhomocysteinase"/>
    <property type="match status" value="1"/>
</dbReference>
<dbReference type="FunFam" id="3.40.50.720:FF:000004">
    <property type="entry name" value="Adenosylhomocysteinase"/>
    <property type="match status" value="1"/>
</dbReference>
<dbReference type="Gene3D" id="3.40.50.1480">
    <property type="entry name" value="Adenosylhomocysteinase-like"/>
    <property type="match status" value="3"/>
</dbReference>
<dbReference type="Gene3D" id="3.40.50.720">
    <property type="entry name" value="NAD(P)-binding Rossmann-like Domain"/>
    <property type="match status" value="1"/>
</dbReference>
<dbReference type="HAMAP" id="MF_00563">
    <property type="entry name" value="AdoHcyase"/>
    <property type="match status" value="1"/>
</dbReference>
<dbReference type="InterPro" id="IPR042172">
    <property type="entry name" value="Adenosylhomocyst_ase-like_sf"/>
</dbReference>
<dbReference type="InterPro" id="IPR000043">
    <property type="entry name" value="Adenosylhomocysteinase-like"/>
</dbReference>
<dbReference type="InterPro" id="IPR015878">
    <property type="entry name" value="Ado_hCys_hydrolase_NAD-bd"/>
</dbReference>
<dbReference type="InterPro" id="IPR036291">
    <property type="entry name" value="NAD(P)-bd_dom_sf"/>
</dbReference>
<dbReference type="InterPro" id="IPR020082">
    <property type="entry name" value="S-Ado-L-homoCys_hydrolase_CS"/>
</dbReference>
<dbReference type="NCBIfam" id="TIGR00936">
    <property type="entry name" value="ahcY"/>
    <property type="match status" value="1"/>
</dbReference>
<dbReference type="NCBIfam" id="NF004005">
    <property type="entry name" value="PRK05476.2-3"/>
    <property type="match status" value="1"/>
</dbReference>
<dbReference type="PANTHER" id="PTHR23420">
    <property type="entry name" value="ADENOSYLHOMOCYSTEINASE"/>
    <property type="match status" value="1"/>
</dbReference>
<dbReference type="PANTHER" id="PTHR23420:SF0">
    <property type="entry name" value="ADENOSYLHOMOCYSTEINASE"/>
    <property type="match status" value="1"/>
</dbReference>
<dbReference type="Pfam" id="PF05221">
    <property type="entry name" value="AdoHcyase"/>
    <property type="match status" value="1"/>
</dbReference>
<dbReference type="Pfam" id="PF00670">
    <property type="entry name" value="AdoHcyase_NAD"/>
    <property type="match status" value="1"/>
</dbReference>
<dbReference type="PIRSF" id="PIRSF001109">
    <property type="entry name" value="Ad_hcy_hydrolase"/>
    <property type="match status" value="1"/>
</dbReference>
<dbReference type="SMART" id="SM00996">
    <property type="entry name" value="AdoHcyase"/>
    <property type="match status" value="1"/>
</dbReference>
<dbReference type="SMART" id="SM00997">
    <property type="entry name" value="AdoHcyase_NAD"/>
    <property type="match status" value="1"/>
</dbReference>
<dbReference type="SUPFAM" id="SSF52283">
    <property type="entry name" value="Formate/glycerate dehydrogenase catalytic domain-like"/>
    <property type="match status" value="1"/>
</dbReference>
<dbReference type="SUPFAM" id="SSF51735">
    <property type="entry name" value="NAD(P)-binding Rossmann-fold domains"/>
    <property type="match status" value="1"/>
</dbReference>
<dbReference type="PROSITE" id="PS00738">
    <property type="entry name" value="ADOHCYASE_1"/>
    <property type="match status" value="1"/>
</dbReference>
<dbReference type="PROSITE" id="PS00739">
    <property type="entry name" value="ADOHCYASE_2"/>
    <property type="match status" value="1"/>
</dbReference>
<evidence type="ECO:0000250" key="1">
    <source>
        <dbReference type="UniProtKB" id="P10760"/>
    </source>
</evidence>
<evidence type="ECO:0000250" key="2">
    <source>
        <dbReference type="UniProtKB" id="P23526"/>
    </source>
</evidence>
<evidence type="ECO:0000250" key="3">
    <source>
        <dbReference type="UniProtKB" id="P50247"/>
    </source>
</evidence>
<evidence type="ECO:0000305" key="4"/>